<accession>P39137</accession>
<feature type="chain" id="PRO_0000054213" description="Amino-acid permease RocE">
    <location>
        <begin position="1"/>
        <end position="467"/>
    </location>
</feature>
<feature type="transmembrane region" description="Helical" evidence="1">
    <location>
        <begin position="21"/>
        <end position="41"/>
    </location>
</feature>
<feature type="transmembrane region" description="Helical" evidence="1">
    <location>
        <begin position="47"/>
        <end position="67"/>
    </location>
</feature>
<feature type="transmembrane region" description="Helical" evidence="1">
    <location>
        <begin position="87"/>
        <end position="107"/>
    </location>
</feature>
<feature type="transmembrane region" description="Helical" evidence="1">
    <location>
        <begin position="122"/>
        <end position="142"/>
    </location>
</feature>
<feature type="transmembrane region" description="Helical" evidence="1">
    <location>
        <begin position="162"/>
        <end position="182"/>
    </location>
</feature>
<feature type="transmembrane region" description="Helical" evidence="1">
    <location>
        <begin position="207"/>
        <end position="227"/>
    </location>
</feature>
<feature type="transmembrane region" description="Helical" evidence="1">
    <location>
        <begin position="246"/>
        <end position="266"/>
    </location>
</feature>
<feature type="transmembrane region" description="Helical" evidence="1">
    <location>
        <begin position="283"/>
        <end position="303"/>
    </location>
</feature>
<feature type="transmembrane region" description="Helical" evidence="1">
    <location>
        <begin position="336"/>
        <end position="356"/>
    </location>
</feature>
<feature type="transmembrane region" description="Helical" evidence="1">
    <location>
        <begin position="361"/>
        <end position="381"/>
    </location>
</feature>
<feature type="transmembrane region" description="Helical" evidence="1">
    <location>
        <begin position="409"/>
        <end position="429"/>
    </location>
</feature>
<feature type="transmembrane region" description="Helical" evidence="1">
    <location>
        <begin position="435"/>
        <end position="455"/>
    </location>
</feature>
<gene>
    <name evidence="3" type="primary">rocE</name>
    <name type="ordered locus">BSU40330</name>
</gene>
<proteinExistence type="evidence at transcript level"/>
<reference key="1">
    <citation type="journal article" date="1995" name="J. Mol. Biol.">
        <title>Expression of the rocDEF operon involved in arginine catabolism in Bacillus subtilis.</title>
        <authorList>
            <person name="Gardan R."/>
            <person name="Rapoport G."/>
            <person name="Debarbouille M."/>
        </authorList>
    </citation>
    <scope>NUCLEOTIDE SEQUENCE [GENOMIC DNA]</scope>
    <scope>INDUCTION</scope>
    <source>
        <strain>168</strain>
    </source>
</reference>
<reference key="2">
    <citation type="journal article" date="1997" name="DNA Res.">
        <title>Sequence analysis of the 36-kb region between gntZ and trnY genes of Bacillus subtilis genome.</title>
        <authorList>
            <person name="Kasahara Y."/>
            <person name="Nakai S."/>
            <person name="Ogasawara N."/>
        </authorList>
    </citation>
    <scope>NUCLEOTIDE SEQUENCE [GENOMIC DNA]</scope>
    <source>
        <strain>168</strain>
    </source>
</reference>
<reference key="3">
    <citation type="journal article" date="1997" name="Nature">
        <title>The complete genome sequence of the Gram-positive bacterium Bacillus subtilis.</title>
        <authorList>
            <person name="Kunst F."/>
            <person name="Ogasawara N."/>
            <person name="Moszer I."/>
            <person name="Albertini A.M."/>
            <person name="Alloni G."/>
            <person name="Azevedo V."/>
            <person name="Bertero M.G."/>
            <person name="Bessieres P."/>
            <person name="Bolotin A."/>
            <person name="Borchert S."/>
            <person name="Borriss R."/>
            <person name="Boursier L."/>
            <person name="Brans A."/>
            <person name="Braun M."/>
            <person name="Brignell S.C."/>
            <person name="Bron S."/>
            <person name="Brouillet S."/>
            <person name="Bruschi C.V."/>
            <person name="Caldwell B."/>
            <person name="Capuano V."/>
            <person name="Carter N.M."/>
            <person name="Choi S.-K."/>
            <person name="Codani J.-J."/>
            <person name="Connerton I.F."/>
            <person name="Cummings N.J."/>
            <person name="Daniel R.A."/>
            <person name="Denizot F."/>
            <person name="Devine K.M."/>
            <person name="Duesterhoeft A."/>
            <person name="Ehrlich S.D."/>
            <person name="Emmerson P.T."/>
            <person name="Entian K.-D."/>
            <person name="Errington J."/>
            <person name="Fabret C."/>
            <person name="Ferrari E."/>
            <person name="Foulger D."/>
            <person name="Fritz C."/>
            <person name="Fujita M."/>
            <person name="Fujita Y."/>
            <person name="Fuma S."/>
            <person name="Galizzi A."/>
            <person name="Galleron N."/>
            <person name="Ghim S.-Y."/>
            <person name="Glaser P."/>
            <person name="Goffeau A."/>
            <person name="Golightly E.J."/>
            <person name="Grandi G."/>
            <person name="Guiseppi G."/>
            <person name="Guy B.J."/>
            <person name="Haga K."/>
            <person name="Haiech J."/>
            <person name="Harwood C.R."/>
            <person name="Henaut A."/>
            <person name="Hilbert H."/>
            <person name="Holsappel S."/>
            <person name="Hosono S."/>
            <person name="Hullo M.-F."/>
            <person name="Itaya M."/>
            <person name="Jones L.-M."/>
            <person name="Joris B."/>
            <person name="Karamata D."/>
            <person name="Kasahara Y."/>
            <person name="Klaerr-Blanchard M."/>
            <person name="Klein C."/>
            <person name="Kobayashi Y."/>
            <person name="Koetter P."/>
            <person name="Koningstein G."/>
            <person name="Krogh S."/>
            <person name="Kumano M."/>
            <person name="Kurita K."/>
            <person name="Lapidus A."/>
            <person name="Lardinois S."/>
            <person name="Lauber J."/>
            <person name="Lazarevic V."/>
            <person name="Lee S.-M."/>
            <person name="Levine A."/>
            <person name="Liu H."/>
            <person name="Masuda S."/>
            <person name="Mauel C."/>
            <person name="Medigue C."/>
            <person name="Medina N."/>
            <person name="Mellado R.P."/>
            <person name="Mizuno M."/>
            <person name="Moestl D."/>
            <person name="Nakai S."/>
            <person name="Noback M."/>
            <person name="Noone D."/>
            <person name="O'Reilly M."/>
            <person name="Ogawa K."/>
            <person name="Ogiwara A."/>
            <person name="Oudega B."/>
            <person name="Park S.-H."/>
            <person name="Parro V."/>
            <person name="Pohl T.M."/>
            <person name="Portetelle D."/>
            <person name="Porwollik S."/>
            <person name="Prescott A.M."/>
            <person name="Presecan E."/>
            <person name="Pujic P."/>
            <person name="Purnelle B."/>
            <person name="Rapoport G."/>
            <person name="Rey M."/>
            <person name="Reynolds S."/>
            <person name="Rieger M."/>
            <person name="Rivolta C."/>
            <person name="Rocha E."/>
            <person name="Roche B."/>
            <person name="Rose M."/>
            <person name="Sadaie Y."/>
            <person name="Sato T."/>
            <person name="Scanlan E."/>
            <person name="Schleich S."/>
            <person name="Schroeter R."/>
            <person name="Scoffone F."/>
            <person name="Sekiguchi J."/>
            <person name="Sekowska A."/>
            <person name="Seror S.J."/>
            <person name="Serror P."/>
            <person name="Shin B.-S."/>
            <person name="Soldo B."/>
            <person name="Sorokin A."/>
            <person name="Tacconi E."/>
            <person name="Takagi T."/>
            <person name="Takahashi H."/>
            <person name="Takemaru K."/>
            <person name="Takeuchi M."/>
            <person name="Tamakoshi A."/>
            <person name="Tanaka T."/>
            <person name="Terpstra P."/>
            <person name="Tognoni A."/>
            <person name="Tosato V."/>
            <person name="Uchiyama S."/>
            <person name="Vandenbol M."/>
            <person name="Vannier F."/>
            <person name="Vassarotti A."/>
            <person name="Viari A."/>
            <person name="Wambutt R."/>
            <person name="Wedler E."/>
            <person name="Wedler H."/>
            <person name="Weitzenegger T."/>
            <person name="Winters P."/>
            <person name="Wipat A."/>
            <person name="Yamamoto H."/>
            <person name="Yamane K."/>
            <person name="Yasumoto K."/>
            <person name="Yata K."/>
            <person name="Yoshida K."/>
            <person name="Yoshikawa H.-F."/>
            <person name="Zumstein E."/>
            <person name="Yoshikawa H."/>
            <person name="Danchin A."/>
        </authorList>
    </citation>
    <scope>NUCLEOTIDE SEQUENCE [LARGE SCALE GENOMIC DNA]</scope>
    <source>
        <strain>168</strain>
    </source>
</reference>
<evidence type="ECO:0000255" key="1"/>
<evidence type="ECO:0000269" key="2">
    <source>
    </source>
</evidence>
<evidence type="ECO:0000303" key="3">
    <source>
    </source>
</evidence>
<evidence type="ECO:0000305" key="4"/>
<sequence length="467" mass="51634">MNTNQDNGNQLQRTMKSRHLFMISLGGVIGTGFFLGTGFTINQAGPLGAVLSYLVGGFIMFLTMLCLGELAVAFPVSGSFQTYATKFISPAFGFAFGWLYWLGWAVTCAIEFLSAGQLMQRWFPHIDVWIWCLVFAALMFILNAITTKAFAESEFWFSGIKILIILLFIILGGAAMFGLIDLKGGEQAPFLTHFYEDGLFPNGIKAMLITMITVNFAFQGTELIGVAAGESEDPEKTIPRSIKQTVWRTLVFFVLSIIVIAGMIPWKQAGVVESPFVAVFEQIGIPYAADIMNFVILIALLSVANSGLYASTRILYAMANEGQAFKALGKTNQRGVPMYSLIVTMAVACLSLLTKFAQAETVYMVLLSLAGMSAQVGWITISLSQIMFRRKYIREGGKIEDLKFKTPLYPVLPLIGLTLNTVVLISLAFDPEQRIALYCGVPFMIICYIIYHVVIKKRQQANRQLEL</sequence>
<name>ROCE_BACSU</name>
<comment type="function">
    <text>Putative transport protein involved in arginine degradative pathway. Probably transports arginine or ornithine.</text>
</comment>
<comment type="subcellular location">
    <subcellularLocation>
        <location>Cell membrane</location>
        <topology>Multi-pass membrane protein</topology>
    </subcellularLocation>
</comment>
<comment type="induction">
    <text evidence="2">Part of the rocDEF operon. Expression is sigma L dependent, induced by arginine, ornithine or proline.</text>
</comment>
<comment type="similarity">
    <text evidence="4">Belongs to the amino acid-polyamine-organocation (APC) superfamily. Amino acid transporter (AAT) (TC 2.A.3.1) family.</text>
</comment>
<dbReference type="EMBL" id="X81802">
    <property type="protein sequence ID" value="CAA57399.1"/>
    <property type="molecule type" value="Genomic_DNA"/>
</dbReference>
<dbReference type="EMBL" id="D78193">
    <property type="protein sequence ID" value="BAA11292.1"/>
    <property type="molecule type" value="Genomic_DNA"/>
</dbReference>
<dbReference type="EMBL" id="AL009126">
    <property type="protein sequence ID" value="CAB16070.1"/>
    <property type="molecule type" value="Genomic_DNA"/>
</dbReference>
<dbReference type="PIR" id="S55794">
    <property type="entry name" value="S49268"/>
</dbReference>
<dbReference type="RefSeq" id="NP_391913.1">
    <property type="nucleotide sequence ID" value="NC_000964.3"/>
</dbReference>
<dbReference type="RefSeq" id="WP_003242721.1">
    <property type="nucleotide sequence ID" value="NZ_OZ025638.1"/>
</dbReference>
<dbReference type="SMR" id="P39137"/>
<dbReference type="FunCoup" id="P39137">
    <property type="interactions" value="57"/>
</dbReference>
<dbReference type="STRING" id="224308.BSU40330"/>
<dbReference type="TCDB" id="2.A.3.1.11">
    <property type="family name" value="the amino acid-polyamine-organocation (apc) family"/>
</dbReference>
<dbReference type="PaxDb" id="224308-BSU40330"/>
<dbReference type="EnsemblBacteria" id="CAB16070">
    <property type="protein sequence ID" value="CAB16070"/>
    <property type="gene ID" value="BSU_40330"/>
</dbReference>
<dbReference type="GeneID" id="937761"/>
<dbReference type="KEGG" id="bsu:BSU40330"/>
<dbReference type="PATRIC" id="fig|224308.179.peg.4363"/>
<dbReference type="eggNOG" id="COG0833">
    <property type="taxonomic scope" value="Bacteria"/>
</dbReference>
<dbReference type="InParanoid" id="P39137"/>
<dbReference type="OrthoDB" id="9780162at2"/>
<dbReference type="PhylomeDB" id="P39137"/>
<dbReference type="BioCyc" id="BSUB:BSU40330-MONOMER"/>
<dbReference type="Proteomes" id="UP000001570">
    <property type="component" value="Chromosome"/>
</dbReference>
<dbReference type="GO" id="GO:0016020">
    <property type="term" value="C:membrane"/>
    <property type="evidence" value="ECO:0000318"/>
    <property type="project" value="GO_Central"/>
</dbReference>
<dbReference type="GO" id="GO:0005886">
    <property type="term" value="C:plasma membrane"/>
    <property type="evidence" value="ECO:0007669"/>
    <property type="project" value="UniProtKB-SubCell"/>
</dbReference>
<dbReference type="GO" id="GO:0015171">
    <property type="term" value="F:amino acid transmembrane transporter activity"/>
    <property type="evidence" value="ECO:0000318"/>
    <property type="project" value="GO_Central"/>
</dbReference>
<dbReference type="GO" id="GO:0003333">
    <property type="term" value="P:amino acid transmembrane transport"/>
    <property type="evidence" value="ECO:0000318"/>
    <property type="project" value="GO_Central"/>
</dbReference>
<dbReference type="GO" id="GO:0006525">
    <property type="term" value="P:arginine metabolic process"/>
    <property type="evidence" value="ECO:0000314"/>
    <property type="project" value="UniProtKB"/>
</dbReference>
<dbReference type="FunFam" id="1.20.1740.10:FF:000001">
    <property type="entry name" value="Amino acid permease"/>
    <property type="match status" value="1"/>
</dbReference>
<dbReference type="Gene3D" id="1.20.1740.10">
    <property type="entry name" value="Amino acid/polyamine transporter I"/>
    <property type="match status" value="1"/>
</dbReference>
<dbReference type="InterPro" id="IPR004841">
    <property type="entry name" value="AA-permease/SLC12A_dom"/>
</dbReference>
<dbReference type="InterPro" id="IPR004840">
    <property type="entry name" value="Amino_acid_permease_CS"/>
</dbReference>
<dbReference type="PANTHER" id="PTHR43495">
    <property type="entry name" value="GABA PERMEASE"/>
    <property type="match status" value="1"/>
</dbReference>
<dbReference type="PANTHER" id="PTHR43495:SF5">
    <property type="entry name" value="GAMMA-AMINOBUTYRIC ACID PERMEASE"/>
    <property type="match status" value="1"/>
</dbReference>
<dbReference type="Pfam" id="PF00324">
    <property type="entry name" value="AA_permease"/>
    <property type="match status" value="1"/>
</dbReference>
<dbReference type="PIRSF" id="PIRSF006060">
    <property type="entry name" value="AA_transporter"/>
    <property type="match status" value="1"/>
</dbReference>
<dbReference type="PROSITE" id="PS00218">
    <property type="entry name" value="AMINO_ACID_PERMEASE_1"/>
    <property type="match status" value="1"/>
</dbReference>
<organism>
    <name type="scientific">Bacillus subtilis (strain 168)</name>
    <dbReference type="NCBI Taxonomy" id="224308"/>
    <lineage>
        <taxon>Bacteria</taxon>
        <taxon>Bacillati</taxon>
        <taxon>Bacillota</taxon>
        <taxon>Bacilli</taxon>
        <taxon>Bacillales</taxon>
        <taxon>Bacillaceae</taxon>
        <taxon>Bacillus</taxon>
    </lineage>
</organism>
<keyword id="KW-0029">Amino-acid transport</keyword>
<keyword id="KW-0056">Arginine metabolism</keyword>
<keyword id="KW-1003">Cell membrane</keyword>
<keyword id="KW-0472">Membrane</keyword>
<keyword id="KW-1185">Reference proteome</keyword>
<keyword id="KW-0812">Transmembrane</keyword>
<keyword id="KW-1133">Transmembrane helix</keyword>
<keyword id="KW-0813">Transport</keyword>
<protein>
    <recommendedName>
        <fullName>Amino-acid permease RocE</fullName>
    </recommendedName>
</protein>